<proteinExistence type="inferred from homology"/>
<keyword id="KW-1185">Reference proteome</keyword>
<keyword id="KW-0687">Ribonucleoprotein</keyword>
<keyword id="KW-0689">Ribosomal protein</keyword>
<keyword id="KW-0694">RNA-binding</keyword>
<keyword id="KW-0699">rRNA-binding</keyword>
<accession>Q7M8F0</accession>
<gene>
    <name evidence="1" type="primary">rplO</name>
    <name type="ordered locus">WS1699</name>
</gene>
<dbReference type="EMBL" id="BX571661">
    <property type="protein sequence ID" value="CAE10726.1"/>
    <property type="molecule type" value="Genomic_DNA"/>
</dbReference>
<dbReference type="RefSeq" id="WP_011139510.1">
    <property type="nucleotide sequence ID" value="NC_005090.1"/>
</dbReference>
<dbReference type="SMR" id="Q7M8F0"/>
<dbReference type="STRING" id="273121.WS1699"/>
<dbReference type="KEGG" id="wsu:WS1699"/>
<dbReference type="eggNOG" id="COG0200">
    <property type="taxonomic scope" value="Bacteria"/>
</dbReference>
<dbReference type="HOGENOM" id="CLU_055188_6_0_7"/>
<dbReference type="Proteomes" id="UP000000422">
    <property type="component" value="Chromosome"/>
</dbReference>
<dbReference type="GO" id="GO:0022625">
    <property type="term" value="C:cytosolic large ribosomal subunit"/>
    <property type="evidence" value="ECO:0007669"/>
    <property type="project" value="TreeGrafter"/>
</dbReference>
<dbReference type="GO" id="GO:0019843">
    <property type="term" value="F:rRNA binding"/>
    <property type="evidence" value="ECO:0007669"/>
    <property type="project" value="UniProtKB-UniRule"/>
</dbReference>
<dbReference type="GO" id="GO:0003735">
    <property type="term" value="F:structural constituent of ribosome"/>
    <property type="evidence" value="ECO:0007669"/>
    <property type="project" value="InterPro"/>
</dbReference>
<dbReference type="GO" id="GO:0006412">
    <property type="term" value="P:translation"/>
    <property type="evidence" value="ECO:0007669"/>
    <property type="project" value="UniProtKB-UniRule"/>
</dbReference>
<dbReference type="HAMAP" id="MF_01341">
    <property type="entry name" value="Ribosomal_uL15"/>
    <property type="match status" value="1"/>
</dbReference>
<dbReference type="InterPro" id="IPR030878">
    <property type="entry name" value="Ribosomal_uL15"/>
</dbReference>
<dbReference type="InterPro" id="IPR036227">
    <property type="entry name" value="Ribosomal_uL15/eL18_sf"/>
</dbReference>
<dbReference type="InterPro" id="IPR005749">
    <property type="entry name" value="Ribosomal_uL15_bac-type"/>
</dbReference>
<dbReference type="NCBIfam" id="TIGR01071">
    <property type="entry name" value="rplO_bact"/>
    <property type="match status" value="1"/>
</dbReference>
<dbReference type="PANTHER" id="PTHR12934">
    <property type="entry name" value="50S RIBOSOMAL PROTEIN L15"/>
    <property type="match status" value="1"/>
</dbReference>
<dbReference type="PANTHER" id="PTHR12934:SF11">
    <property type="entry name" value="LARGE RIBOSOMAL SUBUNIT PROTEIN UL15M"/>
    <property type="match status" value="1"/>
</dbReference>
<dbReference type="SUPFAM" id="SSF52080">
    <property type="entry name" value="Ribosomal proteins L15p and L18e"/>
    <property type="match status" value="1"/>
</dbReference>
<reference key="1">
    <citation type="journal article" date="2003" name="Proc. Natl. Acad. Sci. U.S.A.">
        <title>Complete genome sequence and analysis of Wolinella succinogenes.</title>
        <authorList>
            <person name="Baar C."/>
            <person name="Eppinger M."/>
            <person name="Raddatz G."/>
            <person name="Simon J."/>
            <person name="Lanz C."/>
            <person name="Klimmek O."/>
            <person name="Nandakumar R."/>
            <person name="Gross R."/>
            <person name="Rosinus A."/>
            <person name="Keller H."/>
            <person name="Jagtap P."/>
            <person name="Linke B."/>
            <person name="Meyer F."/>
            <person name="Lederer H."/>
            <person name="Schuster S.C."/>
        </authorList>
    </citation>
    <scope>NUCLEOTIDE SEQUENCE [LARGE SCALE GENOMIC DNA]</scope>
    <source>
        <strain>ATCC 29543 / DSM 1740 / CCUG 13145 / JCM 31913 / LMG 7466 / NCTC 11488 / FDC 602W</strain>
    </source>
</reference>
<evidence type="ECO:0000255" key="1">
    <source>
        <dbReference type="HAMAP-Rule" id="MF_01341"/>
    </source>
</evidence>
<evidence type="ECO:0000256" key="2">
    <source>
        <dbReference type="SAM" id="MobiDB-lite"/>
    </source>
</evidence>
<evidence type="ECO:0000305" key="3"/>
<feature type="chain" id="PRO_0000251586" description="Large ribosomal subunit protein uL15">
    <location>
        <begin position="1"/>
        <end position="133"/>
    </location>
</feature>
<feature type="region of interest" description="Disordered" evidence="2">
    <location>
        <begin position="1"/>
        <end position="60"/>
    </location>
</feature>
<organism>
    <name type="scientific">Wolinella succinogenes (strain ATCC 29543 / DSM 1740 / CCUG 13145 / JCM 31913 / LMG 7466 / NCTC 11488 / FDC 602W)</name>
    <name type="common">Vibrio succinogenes</name>
    <dbReference type="NCBI Taxonomy" id="273121"/>
    <lineage>
        <taxon>Bacteria</taxon>
        <taxon>Pseudomonadati</taxon>
        <taxon>Campylobacterota</taxon>
        <taxon>Epsilonproteobacteria</taxon>
        <taxon>Campylobacterales</taxon>
        <taxon>Helicobacteraceae</taxon>
        <taxon>Wolinella</taxon>
    </lineage>
</organism>
<name>RL15_WOLSU</name>
<comment type="function">
    <text evidence="1">Binds to the 23S rRNA.</text>
</comment>
<comment type="subunit">
    <text evidence="1">Part of the 50S ribosomal subunit.</text>
</comment>
<comment type="similarity">
    <text evidence="1">Belongs to the universal ribosomal protein uL15 family.</text>
</comment>
<protein>
    <recommendedName>
        <fullName evidence="1">Large ribosomal subunit protein uL15</fullName>
    </recommendedName>
    <alternativeName>
        <fullName evidence="3">50S ribosomal protein L15</fullName>
    </alternativeName>
</protein>
<sequence length="133" mass="14237">MALENLKPAQGSTKDRKRVGRGQGSGMGKTSTRGGKGQTARTGYKAKRGFEGGQQPLQRRLPKVGFTTQIAKPYVINVEKITKVAELAEITLDSIASVHKFPASTLKIKLIGKGASELASKIKDERITTSGRA</sequence>